<feature type="chain" id="PRO_1000093976" description="4-hydroxy-tetrahydrodipicolinate reductase">
    <location>
        <begin position="1"/>
        <end position="254"/>
    </location>
</feature>
<feature type="active site" description="Proton donor/acceptor" evidence="1">
    <location>
        <position position="147"/>
    </location>
</feature>
<feature type="active site" description="Proton donor" evidence="1">
    <location>
        <position position="151"/>
    </location>
</feature>
<feature type="binding site" evidence="1">
    <location>
        <begin position="7"/>
        <end position="12"/>
    </location>
    <ligand>
        <name>NAD(+)</name>
        <dbReference type="ChEBI" id="CHEBI:57540"/>
    </ligand>
</feature>
<feature type="binding site" evidence="1">
    <location>
        <position position="35"/>
    </location>
    <ligand>
        <name>NADP(+)</name>
        <dbReference type="ChEBI" id="CHEBI:58349"/>
    </ligand>
</feature>
<feature type="binding site" evidence="1">
    <location>
        <begin position="91"/>
        <end position="93"/>
    </location>
    <ligand>
        <name>NAD(+)</name>
        <dbReference type="ChEBI" id="CHEBI:57540"/>
    </ligand>
</feature>
<feature type="binding site" evidence="1">
    <location>
        <begin position="115"/>
        <end position="118"/>
    </location>
    <ligand>
        <name>NAD(+)</name>
        <dbReference type="ChEBI" id="CHEBI:57540"/>
    </ligand>
</feature>
<feature type="binding site" evidence="1">
    <location>
        <position position="148"/>
    </location>
    <ligand>
        <name>(S)-2,3,4,5-tetrahydrodipicolinate</name>
        <dbReference type="ChEBI" id="CHEBI:16845"/>
    </ligand>
</feature>
<feature type="binding site" evidence="1">
    <location>
        <begin position="157"/>
        <end position="158"/>
    </location>
    <ligand>
        <name>(S)-2,3,4,5-tetrahydrodipicolinate</name>
        <dbReference type="ChEBI" id="CHEBI:16845"/>
    </ligand>
</feature>
<organism>
    <name type="scientific">Helicobacter pylori (strain Shi470)</name>
    <dbReference type="NCBI Taxonomy" id="512562"/>
    <lineage>
        <taxon>Bacteria</taxon>
        <taxon>Pseudomonadati</taxon>
        <taxon>Campylobacterota</taxon>
        <taxon>Epsilonproteobacteria</taxon>
        <taxon>Campylobacterales</taxon>
        <taxon>Helicobacteraceae</taxon>
        <taxon>Helicobacter</taxon>
    </lineage>
</organism>
<reference key="1">
    <citation type="submission" date="2008-05" db="EMBL/GenBank/DDBJ databases">
        <title>Genome sequence of Helicobacter pylori from the remote Amazon: traces of Asian ancestry of the first Americans.</title>
        <authorList>
            <person name="Kersulyte D."/>
            <person name="Kalia A."/>
            <person name="Gilman R.H."/>
            <person name="Berg D.E."/>
        </authorList>
    </citation>
    <scope>NUCLEOTIDE SEQUENCE [LARGE SCALE GENOMIC DNA]</scope>
    <source>
        <strain>Shi470</strain>
    </source>
</reference>
<keyword id="KW-0028">Amino-acid biosynthesis</keyword>
<keyword id="KW-0963">Cytoplasm</keyword>
<keyword id="KW-0220">Diaminopimelate biosynthesis</keyword>
<keyword id="KW-0457">Lysine biosynthesis</keyword>
<keyword id="KW-0520">NAD</keyword>
<keyword id="KW-0521">NADP</keyword>
<keyword id="KW-0560">Oxidoreductase</keyword>
<proteinExistence type="inferred from homology"/>
<dbReference type="EC" id="1.17.1.8" evidence="1"/>
<dbReference type="EMBL" id="CP001072">
    <property type="protein sequence ID" value="ACD48310.1"/>
    <property type="molecule type" value="Genomic_DNA"/>
</dbReference>
<dbReference type="RefSeq" id="WP_000690527.1">
    <property type="nucleotide sequence ID" value="NC_010698.2"/>
</dbReference>
<dbReference type="SMR" id="B2UTX8"/>
<dbReference type="KEGG" id="hps:HPSH_04375"/>
<dbReference type="HOGENOM" id="CLU_047479_2_2_7"/>
<dbReference type="UniPathway" id="UPA00034">
    <property type="reaction ID" value="UER00018"/>
</dbReference>
<dbReference type="GO" id="GO:0005829">
    <property type="term" value="C:cytosol"/>
    <property type="evidence" value="ECO:0007669"/>
    <property type="project" value="TreeGrafter"/>
</dbReference>
<dbReference type="GO" id="GO:0008839">
    <property type="term" value="F:4-hydroxy-tetrahydrodipicolinate reductase"/>
    <property type="evidence" value="ECO:0007669"/>
    <property type="project" value="UniProtKB-EC"/>
</dbReference>
<dbReference type="GO" id="GO:0051287">
    <property type="term" value="F:NAD binding"/>
    <property type="evidence" value="ECO:0007669"/>
    <property type="project" value="UniProtKB-UniRule"/>
</dbReference>
<dbReference type="GO" id="GO:0050661">
    <property type="term" value="F:NADP binding"/>
    <property type="evidence" value="ECO:0007669"/>
    <property type="project" value="UniProtKB-UniRule"/>
</dbReference>
<dbReference type="GO" id="GO:0016726">
    <property type="term" value="F:oxidoreductase activity, acting on CH or CH2 groups, NAD or NADP as acceptor"/>
    <property type="evidence" value="ECO:0007669"/>
    <property type="project" value="UniProtKB-UniRule"/>
</dbReference>
<dbReference type="GO" id="GO:0019877">
    <property type="term" value="P:diaminopimelate biosynthetic process"/>
    <property type="evidence" value="ECO:0007669"/>
    <property type="project" value="UniProtKB-UniRule"/>
</dbReference>
<dbReference type="GO" id="GO:0009089">
    <property type="term" value="P:lysine biosynthetic process via diaminopimelate"/>
    <property type="evidence" value="ECO:0007669"/>
    <property type="project" value="UniProtKB-UniRule"/>
</dbReference>
<dbReference type="CDD" id="cd02274">
    <property type="entry name" value="DHDPR_N"/>
    <property type="match status" value="1"/>
</dbReference>
<dbReference type="FunFam" id="3.30.360.10:FF:000004">
    <property type="entry name" value="4-hydroxy-tetrahydrodipicolinate reductase"/>
    <property type="match status" value="1"/>
</dbReference>
<dbReference type="Gene3D" id="3.30.360.10">
    <property type="entry name" value="Dihydrodipicolinate Reductase, domain 2"/>
    <property type="match status" value="1"/>
</dbReference>
<dbReference type="Gene3D" id="3.40.50.720">
    <property type="entry name" value="NAD(P)-binding Rossmann-like Domain"/>
    <property type="match status" value="1"/>
</dbReference>
<dbReference type="HAMAP" id="MF_00102">
    <property type="entry name" value="DapB"/>
    <property type="match status" value="1"/>
</dbReference>
<dbReference type="InterPro" id="IPR022663">
    <property type="entry name" value="DapB_C"/>
</dbReference>
<dbReference type="InterPro" id="IPR000846">
    <property type="entry name" value="DapB_N"/>
</dbReference>
<dbReference type="InterPro" id="IPR022664">
    <property type="entry name" value="DapB_N_CS"/>
</dbReference>
<dbReference type="InterPro" id="IPR023940">
    <property type="entry name" value="DHDPR_bac"/>
</dbReference>
<dbReference type="InterPro" id="IPR036291">
    <property type="entry name" value="NAD(P)-bd_dom_sf"/>
</dbReference>
<dbReference type="NCBIfam" id="TIGR00036">
    <property type="entry name" value="dapB"/>
    <property type="match status" value="1"/>
</dbReference>
<dbReference type="PANTHER" id="PTHR20836:SF0">
    <property type="entry name" value="4-HYDROXY-TETRAHYDRODIPICOLINATE REDUCTASE 1, CHLOROPLASTIC-RELATED"/>
    <property type="match status" value="1"/>
</dbReference>
<dbReference type="PANTHER" id="PTHR20836">
    <property type="entry name" value="DIHYDRODIPICOLINATE REDUCTASE"/>
    <property type="match status" value="1"/>
</dbReference>
<dbReference type="Pfam" id="PF05173">
    <property type="entry name" value="DapB_C"/>
    <property type="match status" value="1"/>
</dbReference>
<dbReference type="Pfam" id="PF01113">
    <property type="entry name" value="DapB_N"/>
    <property type="match status" value="1"/>
</dbReference>
<dbReference type="PIRSF" id="PIRSF000161">
    <property type="entry name" value="DHPR"/>
    <property type="match status" value="1"/>
</dbReference>
<dbReference type="SUPFAM" id="SSF55347">
    <property type="entry name" value="Glyceraldehyde-3-phosphate dehydrogenase-like, C-terminal domain"/>
    <property type="match status" value="1"/>
</dbReference>
<dbReference type="SUPFAM" id="SSF51735">
    <property type="entry name" value="NAD(P)-binding Rossmann-fold domains"/>
    <property type="match status" value="1"/>
</dbReference>
<dbReference type="PROSITE" id="PS01298">
    <property type="entry name" value="DAPB"/>
    <property type="match status" value="1"/>
</dbReference>
<protein>
    <recommendedName>
        <fullName evidence="1">4-hydroxy-tetrahydrodipicolinate reductase</fullName>
        <shortName evidence="1">HTPA reductase</shortName>
        <ecNumber evidence="1">1.17.1.8</ecNumber>
    </recommendedName>
</protein>
<gene>
    <name evidence="1" type="primary">dapB</name>
    <name type="ordered locus">HPSH_04375</name>
</gene>
<sequence>MKIGVYGASGRIGKLLLEELKGGYKGLELSSVFVRQKCETDFSSFSHAPLVTNDLKAFVRACECVIDFSLPKGVDNLLEALLECPKILVSGTTGLEKETLEKMQQLALKAPLLHAHNMSLGIMMLNQLAFLASLKLKDADIEIVETHHNLKKDAPSGTALSLYETCAKARGYDEKNALTTHREGLRSKESIGIAALRGGDVAGKHTIGFYLEGEYIELSHTATNRSIFAKGALEVALWLKDKAAKKYEINEMFG</sequence>
<comment type="function">
    <text evidence="1">Catalyzes the conversion of 4-hydroxy-tetrahydrodipicolinate (HTPA) to tetrahydrodipicolinate.</text>
</comment>
<comment type="catalytic activity">
    <reaction evidence="1">
        <text>(S)-2,3,4,5-tetrahydrodipicolinate + NAD(+) + H2O = (2S,4S)-4-hydroxy-2,3,4,5-tetrahydrodipicolinate + NADH + H(+)</text>
        <dbReference type="Rhea" id="RHEA:35323"/>
        <dbReference type="ChEBI" id="CHEBI:15377"/>
        <dbReference type="ChEBI" id="CHEBI:15378"/>
        <dbReference type="ChEBI" id="CHEBI:16845"/>
        <dbReference type="ChEBI" id="CHEBI:57540"/>
        <dbReference type="ChEBI" id="CHEBI:57945"/>
        <dbReference type="ChEBI" id="CHEBI:67139"/>
        <dbReference type="EC" id="1.17.1.8"/>
    </reaction>
</comment>
<comment type="catalytic activity">
    <reaction evidence="1">
        <text>(S)-2,3,4,5-tetrahydrodipicolinate + NADP(+) + H2O = (2S,4S)-4-hydroxy-2,3,4,5-tetrahydrodipicolinate + NADPH + H(+)</text>
        <dbReference type="Rhea" id="RHEA:35331"/>
        <dbReference type="ChEBI" id="CHEBI:15377"/>
        <dbReference type="ChEBI" id="CHEBI:15378"/>
        <dbReference type="ChEBI" id="CHEBI:16845"/>
        <dbReference type="ChEBI" id="CHEBI:57783"/>
        <dbReference type="ChEBI" id="CHEBI:58349"/>
        <dbReference type="ChEBI" id="CHEBI:67139"/>
        <dbReference type="EC" id="1.17.1.8"/>
    </reaction>
</comment>
<comment type="pathway">
    <text evidence="1">Amino-acid biosynthesis; L-lysine biosynthesis via DAP pathway; (S)-tetrahydrodipicolinate from L-aspartate: step 4/4.</text>
</comment>
<comment type="subcellular location">
    <subcellularLocation>
        <location evidence="1">Cytoplasm</location>
    </subcellularLocation>
</comment>
<comment type="similarity">
    <text evidence="1">Belongs to the DapB family.</text>
</comment>
<comment type="caution">
    <text evidence="2">Was originally thought to be a dihydrodipicolinate reductase (DHDPR), catalyzing the conversion of dihydrodipicolinate to tetrahydrodipicolinate. However, it was shown in E.coli that the substrate of the enzymatic reaction is not dihydrodipicolinate (DHDP) but in fact (2S,4S)-4-hydroxy-2,3,4,5-tetrahydrodipicolinic acid (HTPA), the product released by the DapA-catalyzed reaction.</text>
</comment>
<name>DAPB_HELPS</name>
<accession>B2UTX8</accession>
<evidence type="ECO:0000255" key="1">
    <source>
        <dbReference type="HAMAP-Rule" id="MF_00102"/>
    </source>
</evidence>
<evidence type="ECO:0000305" key="2"/>